<dbReference type="EMBL" id="Z38125">
    <property type="protein sequence ID" value="CAA86271.1"/>
    <property type="molecule type" value="Genomic_DNA"/>
</dbReference>
<dbReference type="EMBL" id="AY692888">
    <property type="protein sequence ID" value="AAT92907.1"/>
    <property type="molecule type" value="Genomic_DNA"/>
</dbReference>
<dbReference type="EMBL" id="BK006942">
    <property type="protein sequence ID" value="DAA08444.1"/>
    <property type="molecule type" value="Genomic_DNA"/>
</dbReference>
<dbReference type="PIR" id="S48463">
    <property type="entry name" value="S48463"/>
</dbReference>
<dbReference type="RefSeq" id="NP_012157.3">
    <property type="nucleotide sequence ID" value="NM_001179457.3"/>
</dbReference>
<dbReference type="PDB" id="1M2V">
    <property type="method" value="X-ray"/>
    <property type="resolution" value="2.75 A"/>
    <property type="chains" value="B=1-926"/>
</dbReference>
<dbReference type="PDB" id="1PCX">
    <property type="method" value="X-ray"/>
    <property type="resolution" value="2.50 A"/>
    <property type="chains" value="A=117-926"/>
</dbReference>
<dbReference type="PDB" id="1PD0">
    <property type="method" value="X-ray"/>
    <property type="resolution" value="2.60 A"/>
    <property type="chains" value="A=117-926"/>
</dbReference>
<dbReference type="PDB" id="1PD1">
    <property type="method" value="X-ray"/>
    <property type="resolution" value="2.60 A"/>
    <property type="chains" value="A=117-926"/>
</dbReference>
<dbReference type="PDB" id="4BZI">
    <property type="method" value="EM"/>
    <property type="resolution" value="23.00 A"/>
    <property type="chains" value="E/F/L/M/N/O=1-926"/>
</dbReference>
<dbReference type="PDB" id="6GNI">
    <property type="method" value="EM"/>
    <property type="resolution" value="4.90 A"/>
    <property type="chains" value="E=133-926"/>
</dbReference>
<dbReference type="PDB" id="6ZGA">
    <property type="method" value="EM"/>
    <property type="resolution" value="4.60 A"/>
    <property type="chains" value="B/F=1-926"/>
</dbReference>
<dbReference type="PDB" id="8BSH">
    <property type="method" value="EM"/>
    <property type="resolution" value="3.80 A"/>
    <property type="chains" value="C=1-926"/>
</dbReference>
<dbReference type="PDBsum" id="1M2V"/>
<dbReference type="PDBsum" id="1PCX"/>
<dbReference type="PDBsum" id="1PD0"/>
<dbReference type="PDBsum" id="1PD1"/>
<dbReference type="PDBsum" id="4BZI"/>
<dbReference type="PDBsum" id="6GNI"/>
<dbReference type="PDBsum" id="6ZGA"/>
<dbReference type="PDBsum" id="8BSH"/>
<dbReference type="EMDB" id="EMD-0044"/>
<dbReference type="EMDB" id="EMD-11199"/>
<dbReference type="SMR" id="P40482"/>
<dbReference type="BioGRID" id="34882">
    <property type="interactions" value="264"/>
</dbReference>
<dbReference type="ComplexPortal" id="CPX-2523">
    <property type="entry name" value="COPII vesicle coat complex"/>
</dbReference>
<dbReference type="DIP" id="DIP-2233N"/>
<dbReference type="FunCoup" id="P40482">
    <property type="interactions" value="955"/>
</dbReference>
<dbReference type="IntAct" id="P40482">
    <property type="interactions" value="27"/>
</dbReference>
<dbReference type="MINT" id="P40482"/>
<dbReference type="STRING" id="4932.YIL109C"/>
<dbReference type="iPTMnet" id="P40482"/>
<dbReference type="PaxDb" id="4932-YIL109C"/>
<dbReference type="PeptideAtlas" id="P40482"/>
<dbReference type="EnsemblFungi" id="YIL109C_mRNA">
    <property type="protein sequence ID" value="YIL109C"/>
    <property type="gene ID" value="YIL109C"/>
</dbReference>
<dbReference type="GeneID" id="854697"/>
<dbReference type="KEGG" id="sce:YIL109C"/>
<dbReference type="AGR" id="SGD:S000001371"/>
<dbReference type="SGD" id="S000001371">
    <property type="gene designation" value="SEC24"/>
</dbReference>
<dbReference type="VEuPathDB" id="FungiDB:YIL109C"/>
<dbReference type="eggNOG" id="KOG1985">
    <property type="taxonomic scope" value="Eukaryota"/>
</dbReference>
<dbReference type="GeneTree" id="ENSGT00950000182924"/>
<dbReference type="HOGENOM" id="CLU_004589_2_1_1"/>
<dbReference type="InParanoid" id="P40482"/>
<dbReference type="OMA" id="AVECSKQ"/>
<dbReference type="OrthoDB" id="49016at2759"/>
<dbReference type="BioCyc" id="YEAST:G3O-31364-MONOMER"/>
<dbReference type="Reactome" id="R-SCE-204005">
    <property type="pathway name" value="COPII-mediated vesicle transport"/>
</dbReference>
<dbReference type="Reactome" id="R-SCE-5694530">
    <property type="pathway name" value="Cargo concentration in the ER"/>
</dbReference>
<dbReference type="Reactome" id="R-SCE-983170">
    <property type="pathway name" value="Antigen Presentation: Folding, assembly and peptide loading of class I MHC"/>
</dbReference>
<dbReference type="BioGRID-ORCS" id="854697">
    <property type="hits" value="10 hits in 10 CRISPR screens"/>
</dbReference>
<dbReference type="EvolutionaryTrace" id="P40482"/>
<dbReference type="PRO" id="PR:P40482"/>
<dbReference type="Proteomes" id="UP000002311">
    <property type="component" value="Chromosome IX"/>
</dbReference>
<dbReference type="RNAct" id="P40482">
    <property type="molecule type" value="protein"/>
</dbReference>
<dbReference type="GO" id="GO:0030127">
    <property type="term" value="C:COPII vesicle coat"/>
    <property type="evidence" value="ECO:0000314"/>
    <property type="project" value="SGD"/>
</dbReference>
<dbReference type="GO" id="GO:0005783">
    <property type="term" value="C:endoplasmic reticulum"/>
    <property type="evidence" value="ECO:0000314"/>
    <property type="project" value="ComplexPortal"/>
</dbReference>
<dbReference type="GO" id="GO:0070971">
    <property type="term" value="C:endoplasmic reticulum exit site"/>
    <property type="evidence" value="ECO:0000318"/>
    <property type="project" value="GO_Central"/>
</dbReference>
<dbReference type="GO" id="GO:0005789">
    <property type="term" value="C:endoplasmic reticulum membrane"/>
    <property type="evidence" value="ECO:0007669"/>
    <property type="project" value="UniProtKB-SubCell"/>
</dbReference>
<dbReference type="GO" id="GO:0000329">
    <property type="term" value="C:fungal-type vacuole membrane"/>
    <property type="evidence" value="ECO:0007005"/>
    <property type="project" value="SGD"/>
</dbReference>
<dbReference type="GO" id="GO:0000139">
    <property type="term" value="C:Golgi membrane"/>
    <property type="evidence" value="ECO:0007669"/>
    <property type="project" value="UniProtKB-SubCell"/>
</dbReference>
<dbReference type="GO" id="GO:0005048">
    <property type="term" value="F:signal sequence binding"/>
    <property type="evidence" value="ECO:0000315"/>
    <property type="project" value="SGD"/>
</dbReference>
<dbReference type="GO" id="GO:0000149">
    <property type="term" value="F:SNARE binding"/>
    <property type="evidence" value="ECO:0000318"/>
    <property type="project" value="GO_Central"/>
</dbReference>
<dbReference type="GO" id="GO:0008270">
    <property type="term" value="F:zinc ion binding"/>
    <property type="evidence" value="ECO:0000318"/>
    <property type="project" value="GO_Central"/>
</dbReference>
<dbReference type="GO" id="GO:0090110">
    <property type="term" value="P:COPII-coated vesicle cargo loading"/>
    <property type="evidence" value="ECO:0000314"/>
    <property type="project" value="SGD"/>
</dbReference>
<dbReference type="GO" id="GO:0006886">
    <property type="term" value="P:intracellular protein transport"/>
    <property type="evidence" value="ECO:0007669"/>
    <property type="project" value="InterPro"/>
</dbReference>
<dbReference type="GO" id="GO:0016236">
    <property type="term" value="P:macroautophagy"/>
    <property type="evidence" value="ECO:0000315"/>
    <property type="project" value="SGD"/>
</dbReference>
<dbReference type="GO" id="GO:1902953">
    <property type="term" value="P:positive regulation of ER to Golgi vesicle-mediated transport"/>
    <property type="evidence" value="ECO:0000314"/>
    <property type="project" value="ComplexPortal"/>
</dbReference>
<dbReference type="GO" id="GO:0070863">
    <property type="term" value="P:positive regulation of protein exit from endoplasmic reticulum"/>
    <property type="evidence" value="ECO:0000314"/>
    <property type="project" value="ComplexPortal"/>
</dbReference>
<dbReference type="CDD" id="cd01479">
    <property type="entry name" value="Sec24-like"/>
    <property type="match status" value="1"/>
</dbReference>
<dbReference type="FunFam" id="1.20.120.730:FF:000009">
    <property type="entry name" value="Vesicle coat component"/>
    <property type="match status" value="1"/>
</dbReference>
<dbReference type="FunFam" id="3.40.20.10:FF:000049">
    <property type="entry name" value="Vesicle coat component"/>
    <property type="match status" value="1"/>
</dbReference>
<dbReference type="FunFam" id="3.40.50.410:FF:000081">
    <property type="entry name" value="Vesicle coat component"/>
    <property type="match status" value="1"/>
</dbReference>
<dbReference type="Gene3D" id="2.60.40.1670">
    <property type="entry name" value="beta-sandwich domain of Sec23/24"/>
    <property type="match status" value="1"/>
</dbReference>
<dbReference type="Gene3D" id="1.20.120.730">
    <property type="entry name" value="Sec23/Sec24 helical domain"/>
    <property type="match status" value="1"/>
</dbReference>
<dbReference type="Gene3D" id="3.40.20.10">
    <property type="entry name" value="Severin"/>
    <property type="match status" value="1"/>
</dbReference>
<dbReference type="Gene3D" id="3.40.50.410">
    <property type="entry name" value="von Willebrand factor, type A domain"/>
    <property type="match status" value="1"/>
</dbReference>
<dbReference type="Gene3D" id="2.30.30.380">
    <property type="entry name" value="Zn-finger domain of Sec23/24"/>
    <property type="match status" value="1"/>
</dbReference>
<dbReference type="InterPro" id="IPR029006">
    <property type="entry name" value="ADF-H/Gelsolin-like_dom_sf"/>
</dbReference>
<dbReference type="InterPro" id="IPR007123">
    <property type="entry name" value="Gelsolin-like_dom"/>
</dbReference>
<dbReference type="InterPro" id="IPR036180">
    <property type="entry name" value="Gelsolin-like_dom_sf"/>
</dbReference>
<dbReference type="InterPro" id="IPR006900">
    <property type="entry name" value="Sec23/24_helical_dom"/>
</dbReference>
<dbReference type="InterPro" id="IPR036175">
    <property type="entry name" value="Sec23/24_helical_dom_sf"/>
</dbReference>
<dbReference type="InterPro" id="IPR006896">
    <property type="entry name" value="Sec23/24_trunk_dom"/>
</dbReference>
<dbReference type="InterPro" id="IPR012990">
    <property type="entry name" value="Sec23_24_beta_S"/>
</dbReference>
<dbReference type="InterPro" id="IPR050550">
    <property type="entry name" value="SEC23_SEC24_subfamily"/>
</dbReference>
<dbReference type="InterPro" id="IPR041742">
    <property type="entry name" value="Sec24-like_trunk_dom"/>
</dbReference>
<dbReference type="InterPro" id="IPR036465">
    <property type="entry name" value="vWFA_dom_sf"/>
</dbReference>
<dbReference type="InterPro" id="IPR006895">
    <property type="entry name" value="Znf_Sec23_Sec24"/>
</dbReference>
<dbReference type="InterPro" id="IPR036174">
    <property type="entry name" value="Znf_Sec23_Sec24_sf"/>
</dbReference>
<dbReference type="PANTHER" id="PTHR13803">
    <property type="entry name" value="SEC24-RELATED PROTEIN"/>
    <property type="match status" value="1"/>
</dbReference>
<dbReference type="PANTHER" id="PTHR13803:SF39">
    <property type="entry name" value="SECRETORY 24AB, ISOFORM A"/>
    <property type="match status" value="1"/>
</dbReference>
<dbReference type="Pfam" id="PF00626">
    <property type="entry name" value="Gelsolin"/>
    <property type="match status" value="1"/>
</dbReference>
<dbReference type="Pfam" id="PF08033">
    <property type="entry name" value="Sec23_BS"/>
    <property type="match status" value="1"/>
</dbReference>
<dbReference type="Pfam" id="PF04815">
    <property type="entry name" value="Sec23_helical"/>
    <property type="match status" value="1"/>
</dbReference>
<dbReference type="Pfam" id="PF04811">
    <property type="entry name" value="Sec23_trunk"/>
    <property type="match status" value="1"/>
</dbReference>
<dbReference type="Pfam" id="PF04810">
    <property type="entry name" value="zf-Sec23_Sec24"/>
    <property type="match status" value="1"/>
</dbReference>
<dbReference type="SUPFAM" id="SSF81995">
    <property type="entry name" value="beta-sandwich domain of Sec23/24"/>
    <property type="match status" value="1"/>
</dbReference>
<dbReference type="SUPFAM" id="SSF82754">
    <property type="entry name" value="C-terminal, gelsolin-like domain of Sec23/24"/>
    <property type="match status" value="1"/>
</dbReference>
<dbReference type="SUPFAM" id="SSF81811">
    <property type="entry name" value="Helical domain of Sec23/24"/>
    <property type="match status" value="1"/>
</dbReference>
<dbReference type="SUPFAM" id="SSF53300">
    <property type="entry name" value="vWA-like"/>
    <property type="match status" value="1"/>
</dbReference>
<dbReference type="SUPFAM" id="SSF82919">
    <property type="entry name" value="Zn-finger domain of Sec23/24"/>
    <property type="match status" value="1"/>
</dbReference>
<evidence type="ECO:0000256" key="1">
    <source>
        <dbReference type="SAM" id="MobiDB-lite"/>
    </source>
</evidence>
<evidence type="ECO:0000269" key="2">
    <source>
    </source>
</evidence>
<evidence type="ECO:0000269" key="3">
    <source>
    </source>
</evidence>
<evidence type="ECO:0000269" key="4">
    <source>
    </source>
</evidence>
<evidence type="ECO:0000269" key="5">
    <source>
    </source>
</evidence>
<evidence type="ECO:0000269" key="6">
    <source>
    </source>
</evidence>
<evidence type="ECO:0000269" key="7">
    <source>
    </source>
</evidence>
<evidence type="ECO:0000269" key="8">
    <source>
    </source>
</evidence>
<evidence type="ECO:0000269" key="9">
    <source>
    </source>
</evidence>
<evidence type="ECO:0000269" key="10">
    <source>
    </source>
</evidence>
<evidence type="ECO:0000269" key="11">
    <source>
    </source>
</evidence>
<evidence type="ECO:0000269" key="12">
    <source>
    </source>
</evidence>
<evidence type="ECO:0000269" key="13">
    <source>
    </source>
</evidence>
<evidence type="ECO:0000269" key="14">
    <source>
    </source>
</evidence>
<evidence type="ECO:0000269" key="15">
    <source>
    </source>
</evidence>
<evidence type="ECO:0000269" key="16">
    <source>
    </source>
</evidence>
<evidence type="ECO:0000269" key="17">
    <source>
    </source>
</evidence>
<evidence type="ECO:0000269" key="18">
    <source>
    </source>
</evidence>
<evidence type="ECO:0000269" key="19">
    <source>
    </source>
</evidence>
<evidence type="ECO:0000269" key="20">
    <source>
    </source>
</evidence>
<evidence type="ECO:0000269" key="21">
    <source>
    </source>
</evidence>
<evidence type="ECO:0000269" key="22">
    <source>
    </source>
</evidence>
<evidence type="ECO:0000269" key="23">
    <source>
    </source>
</evidence>
<evidence type="ECO:0000269" key="24">
    <source>
    </source>
</evidence>
<evidence type="ECO:0000269" key="25">
    <source>
    </source>
</evidence>
<evidence type="ECO:0000269" key="26">
    <source>
    </source>
</evidence>
<evidence type="ECO:0000269" key="27">
    <source>
    </source>
</evidence>
<evidence type="ECO:0000269" key="28">
    <source>
    </source>
</evidence>
<evidence type="ECO:0000305" key="29"/>
<evidence type="ECO:0000305" key="30">
    <source>
    </source>
</evidence>
<evidence type="ECO:0007744" key="31">
    <source>
    </source>
</evidence>
<evidence type="ECO:0007829" key="32">
    <source>
        <dbReference type="PDB" id="1M2V"/>
    </source>
</evidence>
<evidence type="ECO:0007829" key="33">
    <source>
        <dbReference type="PDB" id="1PCX"/>
    </source>
</evidence>
<evidence type="ECO:0007829" key="34">
    <source>
        <dbReference type="PDB" id="1PD0"/>
    </source>
</evidence>
<feature type="chain" id="PRO_0000205150" description="Protein transport protein SEC24">
    <location>
        <begin position="1"/>
        <end position="926"/>
    </location>
</feature>
<feature type="region of interest" description="Disordered" evidence="1">
    <location>
        <begin position="24"/>
        <end position="50"/>
    </location>
</feature>
<feature type="region of interest" description="Zinc finger-like">
    <location>
        <begin position="231"/>
        <end position="256"/>
    </location>
</feature>
<feature type="binding site" evidence="14 17">
    <location>
        <position position="231"/>
    </location>
    <ligand>
        <name>Zn(2+)</name>
        <dbReference type="ChEBI" id="CHEBI:29105"/>
    </ligand>
</feature>
<feature type="binding site" evidence="14 17">
    <location>
        <position position="234"/>
    </location>
    <ligand>
        <name>Zn(2+)</name>
        <dbReference type="ChEBI" id="CHEBI:29105"/>
    </ligand>
</feature>
<feature type="binding site" evidence="14 17">
    <location>
        <position position="253"/>
    </location>
    <ligand>
        <name>Zn(2+)</name>
        <dbReference type="ChEBI" id="CHEBI:29105"/>
    </ligand>
</feature>
<feature type="binding site" evidence="14 17">
    <location>
        <position position="256"/>
    </location>
    <ligand>
        <name>Zn(2+)</name>
        <dbReference type="ChEBI" id="CHEBI:29105"/>
    </ligand>
</feature>
<feature type="modified residue" description="Phosphoserine" evidence="31">
    <location>
        <position position="178"/>
    </location>
</feature>
<feature type="mutagenesis site" description="Abolishes binding to and packaging of cargo protein BET1." evidence="18">
    <original>R</original>
    <variation>A</variation>
    <location>
        <position position="230"/>
    </location>
</feature>
<feature type="mutagenesis site" description="Lethal." evidence="2">
    <original>C</original>
    <variation>S</variation>
    <location>
        <position position="231"/>
    </location>
</feature>
<feature type="mutagenesis site" description="Abolishes binding to and packaging of cargo protein BET1." evidence="18">
    <original>R</original>
    <variation>A</variation>
    <location>
        <position position="235"/>
    </location>
</feature>
<feature type="mutagenesis site" description="Abolishes binding to and packaging of cargo protein BET1." evidence="18">
    <original>R</original>
    <variation>M</variation>
    <location>
        <position position="559"/>
    </location>
</feature>
<feature type="mutagenesis site" description="Abolishes binding to and packaging of cargo protein BET1." evidence="18">
    <original>R</original>
    <variation>M</variation>
    <location>
        <position position="561"/>
    </location>
</feature>
<feature type="mutagenesis site" description="Abolishes binding to and packaging of cargo protein BET1." evidence="18">
    <original>L</original>
    <variation>W</variation>
    <location>
        <position position="616"/>
    </location>
</feature>
<feature type="helix" evidence="32">
    <location>
        <begin position="64"/>
        <end position="72"/>
    </location>
</feature>
<feature type="strand" evidence="33">
    <location>
        <begin position="140"/>
        <end position="142"/>
    </location>
</feature>
<feature type="helix" evidence="33">
    <location>
        <begin position="143"/>
        <end position="145"/>
    </location>
</feature>
<feature type="helix" evidence="33">
    <location>
        <begin position="151"/>
        <end position="155"/>
    </location>
</feature>
<feature type="helix" evidence="33">
    <location>
        <begin position="165"/>
        <end position="167"/>
    </location>
</feature>
<feature type="strand" evidence="33">
    <location>
        <begin position="168"/>
        <end position="170"/>
    </location>
</feature>
<feature type="helix" evidence="33">
    <location>
        <begin position="173"/>
        <end position="175"/>
    </location>
</feature>
<feature type="turn" evidence="33">
    <location>
        <begin position="179"/>
        <end position="181"/>
    </location>
</feature>
<feature type="strand" evidence="33">
    <location>
        <begin position="182"/>
        <end position="192"/>
    </location>
</feature>
<feature type="helix" evidence="33">
    <location>
        <begin position="193"/>
        <end position="199"/>
    </location>
</feature>
<feature type="strand" evidence="33">
    <location>
        <begin position="204"/>
        <end position="207"/>
    </location>
</feature>
<feature type="strand" evidence="33">
    <location>
        <begin position="212"/>
        <end position="214"/>
    </location>
</feature>
<feature type="turn" evidence="33">
    <location>
        <begin position="232"/>
        <end position="234"/>
    </location>
</feature>
<feature type="strand" evidence="33">
    <location>
        <begin position="243"/>
        <end position="245"/>
    </location>
</feature>
<feature type="turn" evidence="33">
    <location>
        <begin position="246"/>
        <end position="249"/>
    </location>
</feature>
<feature type="strand" evidence="33">
    <location>
        <begin position="250"/>
        <end position="252"/>
    </location>
</feature>
<feature type="turn" evidence="33">
    <location>
        <begin position="254"/>
        <end position="256"/>
    </location>
</feature>
<feature type="strand" evidence="33">
    <location>
        <begin position="259"/>
        <end position="261"/>
    </location>
</feature>
<feature type="helix" evidence="33">
    <location>
        <begin position="264"/>
        <end position="267"/>
    </location>
</feature>
<feature type="helix" evidence="33">
    <location>
        <begin position="277"/>
        <end position="279"/>
    </location>
</feature>
<feature type="helix" evidence="33">
    <location>
        <begin position="281"/>
        <end position="284"/>
    </location>
</feature>
<feature type="strand" evidence="33">
    <location>
        <begin position="286"/>
        <end position="291"/>
    </location>
</feature>
<feature type="helix" evidence="33">
    <location>
        <begin position="294"/>
        <end position="296"/>
    </location>
</feature>
<feature type="strand" evidence="33">
    <location>
        <begin position="305"/>
        <end position="311"/>
    </location>
</feature>
<feature type="helix" evidence="33">
    <location>
        <begin position="314"/>
        <end position="319"/>
    </location>
</feature>
<feature type="helix" evidence="33">
    <location>
        <begin position="321"/>
        <end position="332"/>
    </location>
</feature>
<feature type="turn" evidence="33">
    <location>
        <begin position="333"/>
        <end position="335"/>
    </location>
</feature>
<feature type="strand" evidence="33">
    <location>
        <begin position="344"/>
        <end position="358"/>
    </location>
</feature>
<feature type="helix" evidence="33">
    <location>
        <begin position="362"/>
        <end position="364"/>
    </location>
</feature>
<feature type="strand" evidence="33">
    <location>
        <begin position="374"/>
        <end position="376"/>
    </location>
</feature>
<feature type="turn" evidence="33">
    <location>
        <begin position="390"/>
        <end position="392"/>
    </location>
</feature>
<feature type="strand" evidence="33">
    <location>
        <begin position="393"/>
        <end position="395"/>
    </location>
</feature>
<feature type="turn" evidence="33">
    <location>
        <begin position="396"/>
        <end position="399"/>
    </location>
</feature>
<feature type="helix" evidence="33">
    <location>
        <begin position="400"/>
        <end position="413"/>
    </location>
</feature>
<feature type="turn" evidence="33">
    <location>
        <begin position="414"/>
        <end position="416"/>
    </location>
</feature>
<feature type="helix" evidence="33">
    <location>
        <begin position="424"/>
        <end position="435"/>
    </location>
</feature>
<feature type="turn" evidence="33">
    <location>
        <begin position="436"/>
        <end position="438"/>
    </location>
</feature>
<feature type="strand" evidence="33">
    <location>
        <begin position="440"/>
        <end position="448"/>
    </location>
</feature>
<feature type="helix" evidence="32">
    <location>
        <begin position="471"/>
        <end position="475"/>
    </location>
</feature>
<feature type="helix" evidence="33">
    <location>
        <begin position="482"/>
        <end position="492"/>
    </location>
</feature>
<feature type="strand" evidence="33">
    <location>
        <begin position="495"/>
        <end position="505"/>
    </location>
</feature>
<feature type="helix" evidence="33">
    <location>
        <begin position="509"/>
        <end position="517"/>
    </location>
</feature>
<feature type="turn" evidence="33">
    <location>
        <begin position="518"/>
        <end position="520"/>
    </location>
</feature>
<feature type="strand" evidence="33">
    <location>
        <begin position="523"/>
        <end position="527"/>
    </location>
</feature>
<feature type="helix" evidence="33">
    <location>
        <begin position="534"/>
        <end position="549"/>
    </location>
</feature>
<feature type="strand" evidence="33">
    <location>
        <begin position="554"/>
        <end position="562"/>
    </location>
</feature>
<feature type="strand" evidence="33">
    <location>
        <begin position="566"/>
        <end position="576"/>
    </location>
</feature>
<feature type="strand" evidence="33">
    <location>
        <begin position="578"/>
        <end position="587"/>
    </location>
</feature>
<feature type="strand" evidence="33">
    <location>
        <begin position="594"/>
        <end position="600"/>
    </location>
</feature>
<feature type="strand" evidence="33">
    <location>
        <begin position="606"/>
        <end position="618"/>
    </location>
</feature>
<feature type="turn" evidence="32">
    <location>
        <begin position="620"/>
        <end position="622"/>
    </location>
</feature>
<feature type="strand" evidence="33">
    <location>
        <begin position="624"/>
        <end position="637"/>
    </location>
</feature>
<feature type="helix" evidence="33">
    <location>
        <begin position="639"/>
        <end position="644"/>
    </location>
</feature>
<feature type="helix" evidence="33">
    <location>
        <begin position="648"/>
        <end position="665"/>
    </location>
</feature>
<feature type="helix" evidence="33">
    <location>
        <begin position="668"/>
        <end position="689"/>
    </location>
</feature>
<feature type="strand" evidence="32">
    <location>
        <begin position="696"/>
        <end position="699"/>
    </location>
</feature>
<feature type="strand" evidence="33">
    <location>
        <begin position="702"/>
        <end position="704"/>
    </location>
</feature>
<feature type="helix" evidence="33">
    <location>
        <begin position="705"/>
        <end position="707"/>
    </location>
</feature>
<feature type="helix" evidence="33">
    <location>
        <begin position="710"/>
        <end position="718"/>
    </location>
</feature>
<feature type="turn" evidence="33">
    <location>
        <begin position="721"/>
        <end position="723"/>
    </location>
</feature>
<feature type="helix" evidence="33">
    <location>
        <begin position="730"/>
        <end position="742"/>
    </location>
</feature>
<feature type="helix" evidence="33">
    <location>
        <begin position="745"/>
        <end position="752"/>
    </location>
</feature>
<feature type="strand" evidence="33">
    <location>
        <begin position="755"/>
        <end position="758"/>
    </location>
</feature>
<feature type="turn" evidence="32">
    <location>
        <begin position="759"/>
        <end position="761"/>
    </location>
</feature>
<feature type="helix" evidence="34">
    <location>
        <begin position="791"/>
        <end position="793"/>
    </location>
</feature>
<feature type="strand" evidence="33">
    <location>
        <begin position="799"/>
        <end position="803"/>
    </location>
</feature>
<feature type="strand" evidence="33">
    <location>
        <begin position="805"/>
        <end position="812"/>
    </location>
</feature>
<feature type="helix" evidence="33">
    <location>
        <begin position="818"/>
        <end position="825"/>
    </location>
</feature>
<feature type="helix" evidence="33">
    <location>
        <begin position="830"/>
        <end position="832"/>
    </location>
</feature>
<feature type="helix" evidence="33">
    <location>
        <begin position="847"/>
        <end position="860"/>
    </location>
</feature>
<feature type="strand" evidence="33">
    <location>
        <begin position="870"/>
        <end position="875"/>
    </location>
</feature>
<feature type="helix" evidence="33">
    <location>
        <begin position="885"/>
        <end position="899"/>
    </location>
</feature>
<feature type="helix" evidence="33">
    <location>
        <begin position="913"/>
        <end position="923"/>
    </location>
</feature>
<protein>
    <recommendedName>
        <fullName>Protein transport protein SEC24</fullName>
    </recommendedName>
    <alternativeName>
        <fullName>Abnormal nuclear morphology 1</fullName>
    </alternativeName>
</protein>
<proteinExistence type="evidence at protein level"/>
<gene>
    <name type="primary">SEC24</name>
    <name type="synonym">ANU1</name>
    <name type="ordered locus">YIL109C</name>
</gene>
<accession>P40482</accession>
<accession>D6VVH8</accession>
<reference key="1">
    <citation type="journal article" date="1997" name="Nature">
        <title>The nucleotide sequence of Saccharomyces cerevisiae chromosome IX.</title>
        <authorList>
            <person name="Churcher C.M."/>
            <person name="Bowman S."/>
            <person name="Badcock K."/>
            <person name="Bankier A.T."/>
            <person name="Brown D."/>
            <person name="Chillingworth T."/>
            <person name="Connor R."/>
            <person name="Devlin K."/>
            <person name="Gentles S."/>
            <person name="Hamlin N."/>
            <person name="Harris D.E."/>
            <person name="Horsnell T."/>
            <person name="Hunt S."/>
            <person name="Jagels K."/>
            <person name="Jones M."/>
            <person name="Lye G."/>
            <person name="Moule S."/>
            <person name="Odell C."/>
            <person name="Pearson D."/>
            <person name="Rajandream M.A."/>
            <person name="Rice P."/>
            <person name="Rowley N."/>
            <person name="Skelton J."/>
            <person name="Smith V."/>
            <person name="Walsh S.V."/>
            <person name="Whitehead S."/>
            <person name="Barrell B.G."/>
        </authorList>
    </citation>
    <scope>NUCLEOTIDE SEQUENCE [LARGE SCALE GENOMIC DNA]</scope>
    <source>
        <strain>ATCC 204508 / S288c</strain>
    </source>
</reference>
<reference key="2">
    <citation type="journal article" date="2014" name="G3 (Bethesda)">
        <title>The reference genome sequence of Saccharomyces cerevisiae: Then and now.</title>
        <authorList>
            <person name="Engel S.R."/>
            <person name="Dietrich F.S."/>
            <person name="Fisk D.G."/>
            <person name="Binkley G."/>
            <person name="Balakrishnan R."/>
            <person name="Costanzo M.C."/>
            <person name="Dwight S.S."/>
            <person name="Hitz B.C."/>
            <person name="Karra K."/>
            <person name="Nash R.S."/>
            <person name="Weng S."/>
            <person name="Wong E.D."/>
            <person name="Lloyd P."/>
            <person name="Skrzypek M.S."/>
            <person name="Miyasato S.R."/>
            <person name="Simison M."/>
            <person name="Cherry J.M."/>
        </authorList>
    </citation>
    <scope>GENOME REANNOTATION</scope>
    <source>
        <strain>ATCC 204508 / S288c</strain>
    </source>
</reference>
<reference key="3">
    <citation type="journal article" date="2007" name="Genome Res.">
        <title>Approaching a complete repository of sequence-verified protein-encoding clones for Saccharomyces cerevisiae.</title>
        <authorList>
            <person name="Hu Y."/>
            <person name="Rolfs A."/>
            <person name="Bhullar B."/>
            <person name="Murthy T.V.S."/>
            <person name="Zhu C."/>
            <person name="Berger M.F."/>
            <person name="Camargo A.A."/>
            <person name="Kelley F."/>
            <person name="McCarron S."/>
            <person name="Jepson D."/>
            <person name="Richardson A."/>
            <person name="Raphael J."/>
            <person name="Moreira D."/>
            <person name="Taycher E."/>
            <person name="Zuo D."/>
            <person name="Mohr S."/>
            <person name="Kane M.F."/>
            <person name="Williamson J."/>
            <person name="Simpson A.J.G."/>
            <person name="Bulyk M.L."/>
            <person name="Harlow E."/>
            <person name="Marsischky G."/>
            <person name="Kolodner R.D."/>
            <person name="LaBaer J."/>
        </authorList>
    </citation>
    <scope>NUCLEOTIDE SEQUENCE [GENOMIC DNA]</scope>
    <source>
        <strain>ATCC 204508 / S288c</strain>
    </source>
</reference>
<reference key="4">
    <citation type="journal article" date="1999" name="Proc. Natl. Acad. Sci. U.S.A.">
        <title>Specific interaction of the yeast cis-Golgi syntaxin Sed5p and the coat protein complex II component Sec24p of endoplasmic reticulum-derived transport vesicles.</title>
        <authorList>
            <person name="Peng R."/>
            <person name="Grabowski R."/>
            <person name="De Antoni A."/>
            <person name="Gallwitz D."/>
        </authorList>
    </citation>
    <scope>PROTEIN SEQUENCE OF 731-740 AND 774-793</scope>
    <scope>INTERACTION WITH SED5</scope>
    <scope>MUTAGENESIS OF CYS-231</scope>
</reference>
<reference key="5">
    <citation type="journal article" date="1995" name="Cell">
        <title>COPI- and COPII-coated vesicles bud directly from the endoplasmic reticulum in yeast.</title>
        <authorList>
            <person name="Bednarek S.Y."/>
            <person name="Ravazzola M."/>
            <person name="Hosobuchi M."/>
            <person name="Amherdt M."/>
            <person name="Perrelet A."/>
            <person name="Schekman R.W."/>
            <person name="Orci L."/>
        </authorList>
    </citation>
    <scope>FUNCTION</scope>
    <scope>SUBCELLULAR LOCATION</scope>
</reference>
<reference key="6">
    <citation type="journal article" date="1996" name="Mol. Biol. Cell">
        <title>COPII coat subunit interactions: Sec24p and Sec23p bind to adjacent regions of Sec16p.</title>
        <authorList>
            <person name="Gimeno R.E."/>
            <person name="Espenshade P.J."/>
            <person name="Kaiser C.A."/>
        </authorList>
    </citation>
    <scope>INTERACTION WITH SEC16</scope>
</reference>
<reference key="7">
    <citation type="journal article" date="1997" name="J. Biol. Chem.">
        <title>COPII subunit interactions in the assembly of the vesicle coat.</title>
        <authorList>
            <person name="Shaywitz D.A."/>
            <person name="Espenshade P.J."/>
            <person name="Gimeno R.E."/>
            <person name="Kaiser C.A."/>
        </authorList>
    </citation>
    <scope>IDENTIFICATION IN THE COPII COAT</scope>
    <scope>INTERACTION WITH SEC16</scope>
</reference>
<reference key="8">
    <citation type="journal article" date="1997" name="Proc. Natl. Acad. Sci. U.S.A.">
        <title>Selective packaging of cargo molecules into endoplasmic reticulum-derived COPII vesicles.</title>
        <authorList>
            <person name="Campbell J.L."/>
            <person name="Schekman R.W."/>
        </authorList>
    </citation>
    <scope>FUNCTION</scope>
</reference>
<reference key="9">
    <citation type="journal article" date="1998" name="Cell">
        <title>COPII-coated vesicle formation reconstituted with purified coat proteins and chemically defined liposomes.</title>
        <authorList>
            <person name="Matsuoka K."/>
            <person name="Orci L."/>
            <person name="Amherdt M."/>
            <person name="Bednarek S.Y."/>
            <person name="Hamamoto S."/>
            <person name="Schekman R.W."/>
            <person name="Yeung T."/>
        </authorList>
    </citation>
    <scope>SUBUNIT</scope>
    <scope>SUBCELLULAR LOCATION</scope>
</reference>
<reference key="10">
    <citation type="journal article" date="1998" name="Nature">
        <title>COPII-cargo interactions direct protein sorting into ER-derived transport vesicles.</title>
        <authorList>
            <person name="Kuehn M.J."/>
            <person name="Herrmann J.M."/>
            <person name="Schekman R.W."/>
        </authorList>
    </citation>
    <scope>FUNCTION OF THE SEC23/24 COMPLEX</scope>
</reference>
<reference key="11">
    <citation type="journal article" date="1998" name="Science">
        <title>Nucleation of COPII vesicular coat complex by endoplasmic reticulum to Golgi vesicle SNAREs.</title>
        <authorList>
            <person name="Springer S."/>
            <person name="Schekman R.W."/>
        </authorList>
    </citation>
    <scope>INTERACTION WITH BET1; BOS1; SAR1 AND SEC23</scope>
</reference>
<reference key="12">
    <citation type="journal article" date="1999" name="J. Bacteriol.">
        <title>Clathrin and two components of the COPII complex, Sec23p and Sec24p, could be involved in endocytosis of the Saccharomyces cerevisiae maltose transporter.</title>
        <authorList>
            <person name="Penalver E."/>
            <person name="Lucero P."/>
            <person name="Moreno E."/>
            <person name="Lagunas R."/>
        </authorList>
    </citation>
    <scope>FUNCTION OF THE SEC23/24 COMPLEX</scope>
</reference>
<reference key="13">
    <citation type="journal article" date="1999" name="Mol. Biol. Cell">
        <title>Shr3p mediates specific COPII coatomer-cargo interactions required for the packaging of amino acid permeases into ER-derived transport vesicles.</title>
        <authorList>
            <person name="Gilstring C.F."/>
            <person name="Melin-Larsson M."/>
            <person name="Ljungdahl P.O."/>
        </authorList>
    </citation>
    <scope>INTERACTION WITH SHR3</scope>
</reference>
<reference key="14">
    <citation type="journal article" date="2000" name="J. Biol. Chem.">
        <title>Evidence for overlapping and distinct functions in protein transport of coat protein Sec24p family members.</title>
        <authorList>
            <person name="Peng R."/>
            <person name="De Antoni A."/>
            <person name="Gallwitz D."/>
        </authorList>
    </citation>
    <scope>FUNCTION</scope>
    <scope>SUBCELLULAR LOCATION</scope>
</reference>
<reference key="15">
    <citation type="journal article" date="2000" name="J. Biol. Chem.">
        <title>Sfb2p, a yeast protein related to Sec24p, can function as a constituent of COPII coats required for vesicle budding from the endoplasmic reticulum.</title>
        <authorList>
            <person name="Higashio H."/>
            <person name="Kimata Y."/>
            <person name="Kiriyama T."/>
            <person name="Hirata A."/>
            <person name="Kohno K."/>
        </authorList>
    </citation>
    <scope>FUNCTION</scope>
</reference>
<reference key="16">
    <citation type="journal article" date="2000" name="J. Cell Biol.">
        <title>Lst1p and Sec24p cooperate in sorting of the plasma membrane ATPase into COPII vesicles in Saccharomyces cerevisiae.</title>
        <authorList>
            <person name="Shimoni Y."/>
            <person name="Kurihara T."/>
            <person name="Ravazzola M."/>
            <person name="Amherdt M."/>
            <person name="Orci L."/>
            <person name="Schekman R.W."/>
        </authorList>
    </citation>
    <scope>FUNCTION</scope>
    <scope>SUBCELLULAR LOCATION</scope>
    <scope>INTERACTION WITH PMA1</scope>
</reference>
<reference key="17">
    <citation type="journal article" date="2000" name="Methods">
        <title>The use of liposomes to study COPII- and COPI-coated vesicle formation and membrane protein sorting.</title>
        <authorList>
            <person name="Matsuoka K."/>
            <person name="Schekman R.W."/>
        </authorList>
    </citation>
    <scope>FUNCTION</scope>
    <scope>SUBCELLULAR LOCATION</scope>
</reference>
<reference key="18">
    <citation type="journal article" date="2000" name="Mol. Biol. Cell">
        <title>Sec24p and Iss1p function interchangeably in transport vesicle formation from the endoplasmic reticulum in Saccharomyces cerevisiae.</title>
        <authorList>
            <person name="Kurihara T."/>
            <person name="Hamamoto S."/>
            <person name="Gimeno R.E."/>
            <person name="Kaiser C.A."/>
            <person name="Schekman R.W."/>
            <person name="Yoshihisa T."/>
        </authorList>
    </citation>
    <scope>FUNCTION</scope>
    <scope>SUBCELLULAR LOCATION</scope>
</reference>
<reference key="19">
    <citation type="journal article" date="2001" name="EMBO J.">
        <title>An acidic sequence of a putative yeast Golgi membrane protein binds COPII and facilitates ER export.</title>
        <authorList>
            <person name="Votsmeier C."/>
            <person name="Gallwitz D."/>
        </authorList>
    </citation>
    <scope>INTERACTION WITH SYS1</scope>
</reference>
<reference key="20">
    <citation type="journal article" date="2001" name="J. Biol. Chem.">
        <title>Distinct roles for the cytoplasmic tail sequences of Emp24p and Erv25p in transport between the endoplasmic reticulum and Golgi complex.</title>
        <authorList>
            <person name="Belden W.J."/>
            <person name="Barlowe C."/>
        </authorList>
    </citation>
    <scope>INTERACTION WITH EMP24 AND ERV25</scope>
</reference>
<reference key="21">
    <citation type="journal article" date="2001" name="Nat. Cell Biol.">
        <title>Dynamics of the COPII coat with GTP and stable analogues.</title>
        <authorList>
            <person name="Antonny B."/>
            <person name="Madden D.T."/>
            <person name="Hamamoto S."/>
            <person name="Orci L."/>
            <person name="Schekman R.W."/>
        </authorList>
    </citation>
    <scope>IDENTIFICATION IN THE COPII COAT</scope>
</reference>
<reference key="22">
    <citation type="journal article" date="2007" name="J. Proteome Res.">
        <title>Large-scale phosphorylation analysis of alpha-factor-arrested Saccharomyces cerevisiae.</title>
        <authorList>
            <person name="Li X."/>
            <person name="Gerber S.A."/>
            <person name="Rudner A.D."/>
            <person name="Beausoleil S.A."/>
            <person name="Haas W."/>
            <person name="Villen J."/>
            <person name="Elias J.E."/>
            <person name="Gygi S.P."/>
        </authorList>
    </citation>
    <scope>PHOSPHORYLATION [LARGE SCALE ANALYSIS] AT SER-178</scope>
    <scope>IDENTIFICATION BY MASS SPECTROMETRY [LARGE SCALE ANALYSIS]</scope>
    <source>
        <strain>ADR376</strain>
    </source>
</reference>
<reference key="23">
    <citation type="journal article" date="2008" name="Mol. Cell. Proteomics">
        <title>A multidimensional chromatography technology for in-depth phosphoproteome analysis.</title>
        <authorList>
            <person name="Albuquerque C.P."/>
            <person name="Smolka M.B."/>
            <person name="Payne S.H."/>
            <person name="Bafna V."/>
            <person name="Eng J."/>
            <person name="Zhou H."/>
        </authorList>
    </citation>
    <scope>IDENTIFICATION BY MASS SPECTROMETRY [LARGE SCALE ANALYSIS]</scope>
</reference>
<reference key="24">
    <citation type="journal article" date="2001" name="Proc. Natl. Acad. Sci. U.S.A.">
        <title>Structure of the Sec23p/24p and Sec13p/31p complexes of COPII.</title>
        <authorList>
            <person name="Lederkremer G.Z."/>
            <person name="Cheng Y."/>
            <person name="Petre B.M."/>
            <person name="Vogan E."/>
            <person name="Springer S."/>
            <person name="Schekman R.W."/>
            <person name="Walz T."/>
            <person name="Kirchhausen T."/>
        </authorList>
    </citation>
    <scope>ELECTRON MICROSCOPY OF THE SEC23/24 COMPLEX</scope>
</reference>
<reference key="25">
    <citation type="journal article" date="2001" name="Proc. Natl. Acad. Sci. U.S.A.">
        <title>Surface structure of the COPII-coated vesicle.</title>
        <authorList>
            <person name="Matsuoka K."/>
            <person name="Schekman R.W."/>
            <person name="Orci L."/>
            <person name="Heuser J.E."/>
        </authorList>
    </citation>
    <scope>ELECTRON MICROSCOPY OF THE SEC23/24 COMPLEX</scope>
</reference>
<reference key="26">
    <citation type="journal article" date="2002" name="J. Cell Biol.">
        <title>Sec16p potentiates the action of COPII proteins to bud transport vesicles.</title>
        <authorList>
            <person name="Supek F."/>
            <person name="Madden D.T."/>
            <person name="Hamamoto S."/>
            <person name="Orci L."/>
            <person name="Schekman R.W."/>
        </authorList>
    </citation>
    <scope>SUBCELLULAR LOCATION</scope>
</reference>
<reference key="27">
    <citation type="journal article" date="2003" name="EMBO Rep.">
        <title>Self-assembly of minimal COPII cages.</title>
        <authorList>
            <person name="Antonny B."/>
            <person name="Gounon P."/>
            <person name="Schekman R.W."/>
            <person name="Orci L."/>
        </authorList>
    </citation>
    <scope>STRUCTURE OF THE COPII COMPLEX</scope>
</reference>
<reference key="28">
    <citation type="journal article" date="2003" name="Cell">
        <title>Multiple cargo binding sites on the COPII subunit Sec24p ensure capture of diverse membrane proteins into transport vesicles.</title>
        <authorList>
            <person name="Miller E.A."/>
            <person name="Beilharz T.H."/>
            <person name="Malkus P.N."/>
            <person name="Lee M.C.S."/>
            <person name="Hamamoto S."/>
            <person name="Orci L."/>
            <person name="Schekman R.W."/>
        </authorList>
    </citation>
    <scope>FUNCTION</scope>
    <scope>INTERACTION WITH BET1 AND SYS1</scope>
    <scope>MUTAGENESIS OF ARG-230; ARG-235; ARG-559; ARG-561 AND LEU-616</scope>
</reference>
<reference key="29">
    <citation type="journal article" date="2003" name="Cell Struct. Funct.">
        <title>The early secretory pathway contributes to autophagy in yeast.</title>
        <authorList>
            <person name="Hamasaki M."/>
            <person name="Noda T."/>
            <person name="Ohsumi Y."/>
        </authorList>
    </citation>
    <scope>FUNCTION</scope>
</reference>
<reference key="30">
    <citation type="journal article" date="2003" name="Nature">
        <title>Global analysis of protein localization in budding yeast.</title>
        <authorList>
            <person name="Huh W.-K."/>
            <person name="Falvo J.V."/>
            <person name="Gerke L.C."/>
            <person name="Carroll A.S."/>
            <person name="Howson R.W."/>
            <person name="Weissman J.S."/>
            <person name="O'Shea E.K."/>
        </authorList>
    </citation>
    <scope>SUBCELLULAR LOCATION [LARGE SCALE ANALYSIS]</scope>
</reference>
<reference key="31">
    <citation type="journal article" date="2003" name="Nat. Cell Biol.">
        <title>Ubp3 requires a cofactor, Bre5, to specifically de-ubiquitinate the COPII protein, Sec23.</title>
        <authorList>
            <person name="Cohen M."/>
            <person name="Stutz F."/>
            <person name="Belgareh N."/>
            <person name="Haguenauer-Tsapis R."/>
            <person name="Dargemont C."/>
        </authorList>
    </citation>
    <scope>INTERACTION WITH SEC23</scope>
</reference>
<reference key="32">
    <citation type="journal article" date="2004" name="J. Biol. Chem.">
        <title>Reconstitution of coat protein complex II (COPII) vesicle formation from cargo-reconstituted proteoliposomes reveals the potential role of GTP hydrolysis by Sar1p in protein sorting.</title>
        <authorList>
            <person name="Sato K."/>
            <person name="Nakano A."/>
        </authorList>
    </citation>
    <scope>COPII COMPLEX ASSEMBLY</scope>
    <scope>FUNCTION OF THE COPII COMPLEX</scope>
</reference>
<reference key="33">
    <citation type="journal article" date="2005" name="Cell">
        <title>Exploration of the function and organization of the yeast early secretory pathway through an epistatic miniarray profile.</title>
        <authorList>
            <person name="Schuldiner M."/>
            <person name="Collins S.R."/>
            <person name="Thompson N.J."/>
            <person name="Denic V."/>
            <person name="Bhamidipati A."/>
            <person name="Punna T."/>
            <person name="Ihmels J."/>
            <person name="Andrews B."/>
            <person name="Boone C."/>
            <person name="Greenblatt J.F."/>
            <person name="Weissman J.S."/>
            <person name="Krogan N.J."/>
        </authorList>
    </citation>
    <scope>FUNCTION</scope>
    <scope>INTERACTION WITH GRH1</scope>
</reference>
<reference key="34">
    <citation type="journal article" date="2007" name="J. Cell Biol.">
        <title>The yeast orthologue of GRASP65 forms a complex with a coiled-coil protein that contributes to ER to Golgi traffic.</title>
        <authorList>
            <person name="Behnia R."/>
            <person name="Barr F.A."/>
            <person name="Flanagan J.J."/>
            <person name="Barlowe C."/>
            <person name="Munro S."/>
        </authorList>
    </citation>
    <scope>INTERACTION WITH GHR1</scope>
</reference>
<reference key="35">
    <citation type="journal article" date="2002" name="Nature">
        <title>Structure of the Sec23/24-Sar1 pre-budding complex of the COPII vesicle coat.</title>
        <authorList>
            <person name="Bi X."/>
            <person name="Corpina R.A."/>
            <person name="Goldberg J."/>
        </authorList>
    </citation>
    <scope>X-RAY CRYSTALLOGRAPHY (2.75 ANGSTROMS) IN COMPLEX WITH SEC23 AND ZINC</scope>
</reference>
<reference key="36">
    <citation type="journal article" date="2003" name="Cell">
        <title>SNARE selectivity of the COPII coat.</title>
        <authorList>
            <person name="Mossessova E."/>
            <person name="Bickford L.C."/>
            <person name="Goldberg J."/>
        </authorList>
    </citation>
    <scope>X-RAY CRYSTALLOGRAPHY (2.5 ANGSTROMS) OF 117-926 IN COMPLEX WITH SED5; SYS1; BET1 AND ZINC</scope>
    <scope>INTERACTION WITH SEC22</scope>
</reference>
<comment type="function">
    <text evidence="3 5 6 7 8 9 15 18 19 20 22 24 26">Component of the coat protein complex II (COPII) which promotes the formation of transport vesicles from the endoplasmic reticulum (ER). The coat has two main functions, the physical deformation of the endoplasmic reticulum membrane into vesicles and the selection of cargo molecules. SEC24 specifically recruits cargo proteins like BET1 or SYS1 to the COPII vesicles. The SEC23/24 complex is also involved in internalization of plasma membrane proteins like the maltose transporter.</text>
</comment>
<comment type="subunit">
    <text evidence="2 4 9 10 11 12 14 16 17 18 20 21 23 25 27 28">The COPII coat is composed of at least 7 proteins: the SEC23/24 complex, the SEC13/31 complex, SFB2, SFB3 and the protein SAR1. Interacts with BET1, EMP24, GRH1, SEC22, SED5 and SYS1.</text>
</comment>
<comment type="interaction">
    <interactant intactId="EBI-16592">
        <id>P40482</id>
    </interactant>
    <interactant intactId="EBI-32083">
        <id>Q04410</id>
        <label>GRH1</label>
    </interactant>
    <organismsDiffer>false</organismsDiffer>
    <experiments>4</experiments>
</comment>
<comment type="interaction">
    <interactant intactId="EBI-16592">
        <id>P40482</id>
    </interactant>
    <interactant intactId="EBI-16584">
        <id>P15303</id>
        <label>SEC23</label>
    </interactant>
    <organismsDiffer>false</organismsDiffer>
    <experiments>6</experiments>
</comment>
<comment type="interaction">
    <interactant intactId="EBI-16592">
        <id>P40482</id>
    </interactant>
    <interactant intactId="EBI-20524">
        <id>P38968</id>
        <label>SEC31</label>
    </interactant>
    <organismsDiffer>false</organismsDiffer>
    <experiments>4</experiments>
</comment>
<comment type="subcellular location">
    <subcellularLocation>
        <location evidence="22">Cytoplasm</location>
    </subcellularLocation>
    <subcellularLocation>
        <location evidence="6 8 9 13 22 27">Cytoplasmic vesicle</location>
        <location evidence="6 8 9 13 22 27">COPII-coated vesicle membrane</location>
        <topology evidence="9 22">Peripheral membrane protein</topology>
        <orientation evidence="22">Cytoplasmic side</orientation>
    </subcellularLocation>
    <subcellularLocation>
        <location evidence="5 22">Endoplasmic reticulum membrane</location>
        <topology>Peripheral membrane protein</topology>
        <orientation>Cytoplasmic side</orientation>
    </subcellularLocation>
    <subcellularLocation>
        <location evidence="30">Golgi apparatus membrane</location>
        <topology evidence="29">Peripheral membrane protein</topology>
        <orientation evidence="29">Cytoplasmic side</orientation>
    </subcellularLocation>
</comment>
<comment type="similarity">
    <text evidence="29">Belongs to the SEC23/SEC24 family. SEC24 subfamily.</text>
</comment>
<organism>
    <name type="scientific">Saccharomyces cerevisiae (strain ATCC 204508 / S288c)</name>
    <name type="common">Baker's yeast</name>
    <dbReference type="NCBI Taxonomy" id="559292"/>
    <lineage>
        <taxon>Eukaryota</taxon>
        <taxon>Fungi</taxon>
        <taxon>Dikarya</taxon>
        <taxon>Ascomycota</taxon>
        <taxon>Saccharomycotina</taxon>
        <taxon>Saccharomycetes</taxon>
        <taxon>Saccharomycetales</taxon>
        <taxon>Saccharomycetaceae</taxon>
        <taxon>Saccharomyces</taxon>
    </lineage>
</organism>
<name>SEC24_YEAST</name>
<sequence>MSHHKKRVYPQAQLQYGQNATPLQQPAQFMPPQDPAAAGMSYGQMGMPPQGAVPSMGQQQFLTPAQEQLHQQIDQATTSMNDMHLHNVPLVDPNAYMQPQVPVQMGTPLQQQQQPMAAPAYGQPSAAMGQNMRPMNQLYPIDLLTELPPPITDLTLPPPPLVIPPERMLVPSELSNASPDYIRSTLNAVPKNSSLLKKSKLPFGLVIRPYQHLYDDIDPPPLNEDGLIVRCRRCRSYMNPFVTFIEQGRRWRCNFCRLANDVPMQMDQSDPNDPKSRYDRNEIKCAVMEYMAPKEYTLRQPPPATYCFLIDVSQSSIKSGLLATTINTLLQNLDSIPNHDERTRISILCVDNAIHYFKIPLDSENNEESADQINMMDIADLEEPFLPRPNSMVVSLKACRQNIETLLTKIPQIFQSNLITNFALGPALKSAYHLIGGVGGKIIVVSGTLPNLGIGKLQRRNESGVVNTSKETAQLLSCQDSFYKNFTIDCSKVQITVDLFLASEDYMDVASLSNLSRFTAGQTHFYPGFSGKNPNDIVKFSTEFAKHISMDFCMETVMRARGSTGLRMSRFYGHFFNRSSDLCAFSTMPRDQSYLFEVNVDESIMADYCYVQVAVLLSLNNSQRRIRIITLAMPTTESLAEVYASADQLAIASFYNSKAVEKALNSSLDDARVLINKSVQDILATYKKEIVVSNTAGGAPLRLCANLRMFPLLMHSLTKHMAFRSGIVPSDHRASALNNLESLPLKYLIKNIYPDVYSLHDMADEAGLPVQTEDGEATGTIVLPQPINATSSLFERYGLYLIDNGNELFLWMGGDAVPALVFDVFGTQDIFDIPIGKQEIPVVENSEFNQRVRNIINQLRNHDDVITYQSLYIVRGASLSEPVNHASAREVATLRLWASSTLVEDKILNNESYREFLQIMKARISK</sequence>
<keyword id="KW-0002">3D-structure</keyword>
<keyword id="KW-0963">Cytoplasm</keyword>
<keyword id="KW-0968">Cytoplasmic vesicle</keyword>
<keyword id="KW-0903">Direct protein sequencing</keyword>
<keyword id="KW-0256">Endoplasmic reticulum</keyword>
<keyword id="KW-0931">ER-Golgi transport</keyword>
<keyword id="KW-0333">Golgi apparatus</keyword>
<keyword id="KW-0472">Membrane</keyword>
<keyword id="KW-0479">Metal-binding</keyword>
<keyword id="KW-0597">Phosphoprotein</keyword>
<keyword id="KW-0653">Protein transport</keyword>
<keyword id="KW-1185">Reference proteome</keyword>
<keyword id="KW-0813">Transport</keyword>
<keyword id="KW-0862">Zinc</keyword>